<keyword id="KW-0004">4Fe-4S</keyword>
<keyword id="KW-0150">Chloroplast</keyword>
<keyword id="KW-0249">Electron transport</keyword>
<keyword id="KW-0408">Iron</keyword>
<keyword id="KW-0411">Iron-sulfur</keyword>
<keyword id="KW-0472">Membrane</keyword>
<keyword id="KW-0479">Metal-binding</keyword>
<keyword id="KW-0560">Oxidoreductase</keyword>
<keyword id="KW-0602">Photosynthesis</keyword>
<keyword id="KW-0603">Photosystem I</keyword>
<keyword id="KW-0934">Plastid</keyword>
<keyword id="KW-0677">Repeat</keyword>
<keyword id="KW-0793">Thylakoid</keyword>
<keyword id="KW-0813">Transport</keyword>
<sequence length="81" mass="8775">MSHSVKIYNTCIGCTQCVRACPTDVLEMVPWDGCKAGQIASSPRTEDCVGCKRCESACPTDFLSVRVYLGSETSRSMGLAY</sequence>
<organism>
    <name type="scientific">Euglena gracilis</name>
    <dbReference type="NCBI Taxonomy" id="3039"/>
    <lineage>
        <taxon>Eukaryota</taxon>
        <taxon>Discoba</taxon>
        <taxon>Euglenozoa</taxon>
        <taxon>Euglenida</taxon>
        <taxon>Spirocuta</taxon>
        <taxon>Euglenophyceae</taxon>
        <taxon>Euglenales</taxon>
        <taxon>Euglenaceae</taxon>
        <taxon>Euglena</taxon>
    </lineage>
</organism>
<dbReference type="EC" id="1.97.1.12" evidence="2"/>
<dbReference type="EMBL" id="X70810">
    <property type="protein sequence ID" value="CAA50121.1"/>
    <property type="molecule type" value="Genomic_DNA"/>
</dbReference>
<dbReference type="PIR" id="S34540">
    <property type="entry name" value="S34540"/>
</dbReference>
<dbReference type="RefSeq" id="NP_041934.1">
    <property type="nucleotide sequence ID" value="NC_001603.2"/>
</dbReference>
<dbReference type="SMR" id="P31556"/>
<dbReference type="GeneID" id="807529"/>
<dbReference type="GO" id="GO:0009535">
    <property type="term" value="C:chloroplast thylakoid membrane"/>
    <property type="evidence" value="ECO:0007669"/>
    <property type="project" value="UniProtKB-SubCell"/>
</dbReference>
<dbReference type="GO" id="GO:0009522">
    <property type="term" value="C:photosystem I"/>
    <property type="evidence" value="ECO:0007669"/>
    <property type="project" value="UniProtKB-KW"/>
</dbReference>
<dbReference type="GO" id="GO:0051539">
    <property type="term" value="F:4 iron, 4 sulfur cluster binding"/>
    <property type="evidence" value="ECO:0007669"/>
    <property type="project" value="UniProtKB-KW"/>
</dbReference>
<dbReference type="GO" id="GO:0009055">
    <property type="term" value="F:electron transfer activity"/>
    <property type="evidence" value="ECO:0007669"/>
    <property type="project" value="UniProtKB-UniRule"/>
</dbReference>
<dbReference type="GO" id="GO:0046872">
    <property type="term" value="F:metal ion binding"/>
    <property type="evidence" value="ECO:0007669"/>
    <property type="project" value="UniProtKB-KW"/>
</dbReference>
<dbReference type="GO" id="GO:0016491">
    <property type="term" value="F:oxidoreductase activity"/>
    <property type="evidence" value="ECO:0007669"/>
    <property type="project" value="UniProtKB-KW"/>
</dbReference>
<dbReference type="GO" id="GO:0009773">
    <property type="term" value="P:photosynthetic electron transport in photosystem I"/>
    <property type="evidence" value="ECO:0007669"/>
    <property type="project" value="InterPro"/>
</dbReference>
<dbReference type="FunFam" id="3.30.70.20:FF:000001">
    <property type="entry name" value="Photosystem I iron-sulfur center"/>
    <property type="match status" value="1"/>
</dbReference>
<dbReference type="Gene3D" id="3.30.70.20">
    <property type="match status" value="1"/>
</dbReference>
<dbReference type="HAMAP" id="MF_01303">
    <property type="entry name" value="PSI_PsaC"/>
    <property type="match status" value="1"/>
</dbReference>
<dbReference type="InterPro" id="IPR017896">
    <property type="entry name" value="4Fe4S_Fe-S-bd"/>
</dbReference>
<dbReference type="InterPro" id="IPR017900">
    <property type="entry name" value="4Fe4S_Fe_S_CS"/>
</dbReference>
<dbReference type="InterPro" id="IPR050157">
    <property type="entry name" value="PSI_iron-sulfur_center"/>
</dbReference>
<dbReference type="InterPro" id="IPR017491">
    <property type="entry name" value="PSI_PsaC"/>
</dbReference>
<dbReference type="NCBIfam" id="TIGR03048">
    <property type="entry name" value="PS_I_psaC"/>
    <property type="match status" value="1"/>
</dbReference>
<dbReference type="PANTHER" id="PTHR24960:SF79">
    <property type="entry name" value="PHOTOSYSTEM I IRON-SULFUR CENTER"/>
    <property type="match status" value="1"/>
</dbReference>
<dbReference type="PANTHER" id="PTHR24960">
    <property type="entry name" value="PHOTOSYSTEM I IRON-SULFUR CENTER-RELATED"/>
    <property type="match status" value="1"/>
</dbReference>
<dbReference type="Pfam" id="PF12838">
    <property type="entry name" value="Fer4_7"/>
    <property type="match status" value="1"/>
</dbReference>
<dbReference type="SUPFAM" id="SSF54862">
    <property type="entry name" value="4Fe-4S ferredoxins"/>
    <property type="match status" value="1"/>
</dbReference>
<dbReference type="PROSITE" id="PS00198">
    <property type="entry name" value="4FE4S_FER_1"/>
    <property type="match status" value="2"/>
</dbReference>
<dbReference type="PROSITE" id="PS51379">
    <property type="entry name" value="4FE4S_FER_2"/>
    <property type="match status" value="2"/>
</dbReference>
<gene>
    <name evidence="2" type="primary">psaC</name>
</gene>
<reference key="1">
    <citation type="journal article" date="1993" name="Nucleic Acids Res.">
        <title>Complete sequence of Euglena gracilis chloroplast DNA.</title>
        <authorList>
            <person name="Hallick R.B."/>
            <person name="Hong L."/>
            <person name="Drager R.G."/>
            <person name="Favreau M.R."/>
            <person name="Monfort A."/>
            <person name="Orsat B."/>
            <person name="Spielmann A."/>
            <person name="Stutz E."/>
        </authorList>
    </citation>
    <scope>NUCLEOTIDE SEQUENCE [LARGE SCALE GENOMIC DNA]</scope>
    <source>
        <strain>Z / UTEX 753</strain>
    </source>
</reference>
<geneLocation type="chloroplast"/>
<feature type="initiator methionine" description="Removed" evidence="1">
    <location>
        <position position="1"/>
    </location>
</feature>
<feature type="chain" id="PRO_0000061980" description="Photosystem I iron-sulfur center">
    <location>
        <begin position="2"/>
        <end position="81"/>
    </location>
</feature>
<feature type="domain" description="4Fe-4S ferredoxin-type 1" evidence="2">
    <location>
        <begin position="2"/>
        <end position="31"/>
    </location>
</feature>
<feature type="domain" description="4Fe-4S ferredoxin-type 2" evidence="2">
    <location>
        <begin position="37"/>
        <end position="68"/>
    </location>
</feature>
<feature type="binding site" evidence="2">
    <location>
        <position position="11"/>
    </location>
    <ligand>
        <name>[4Fe-4S] cluster</name>
        <dbReference type="ChEBI" id="CHEBI:49883"/>
        <label>1</label>
    </ligand>
</feature>
<feature type="binding site" evidence="2">
    <location>
        <position position="14"/>
    </location>
    <ligand>
        <name>[4Fe-4S] cluster</name>
        <dbReference type="ChEBI" id="CHEBI:49883"/>
        <label>1</label>
    </ligand>
</feature>
<feature type="binding site" evidence="2">
    <location>
        <position position="17"/>
    </location>
    <ligand>
        <name>[4Fe-4S] cluster</name>
        <dbReference type="ChEBI" id="CHEBI:49883"/>
        <label>1</label>
    </ligand>
</feature>
<feature type="binding site" evidence="2">
    <location>
        <position position="21"/>
    </location>
    <ligand>
        <name>[4Fe-4S] cluster</name>
        <dbReference type="ChEBI" id="CHEBI:49883"/>
        <label>2</label>
    </ligand>
</feature>
<feature type="binding site" evidence="2">
    <location>
        <position position="48"/>
    </location>
    <ligand>
        <name>[4Fe-4S] cluster</name>
        <dbReference type="ChEBI" id="CHEBI:49883"/>
        <label>2</label>
    </ligand>
</feature>
<feature type="binding site" evidence="2">
    <location>
        <position position="51"/>
    </location>
    <ligand>
        <name>[4Fe-4S] cluster</name>
        <dbReference type="ChEBI" id="CHEBI:49883"/>
        <label>2</label>
    </ligand>
</feature>
<feature type="binding site" evidence="2">
    <location>
        <position position="54"/>
    </location>
    <ligand>
        <name>[4Fe-4S] cluster</name>
        <dbReference type="ChEBI" id="CHEBI:49883"/>
        <label>2</label>
    </ligand>
</feature>
<feature type="binding site" evidence="2">
    <location>
        <position position="58"/>
    </location>
    <ligand>
        <name>[4Fe-4S] cluster</name>
        <dbReference type="ChEBI" id="CHEBI:49883"/>
        <label>1</label>
    </ligand>
</feature>
<comment type="function">
    <text>Apoprotein for the two 4Fe-4S centers FA and FB of photosystem I (PSI); essential for photochemical activity. FB is the terminal electron acceptor of PSI, donating electrons to ferredoxin. The C-terminus interacts with PsaA/B/D and helps assemble the protein into the PSI complex. Required for binding of PsaD and PsaE to PSI. PSI is a plastocyanin/cytochrome c6-ferredoxin oxidoreductase, converting photonic excitation into a charge separation, which transfers an electron from the donor P700 chlorophyll pair to the spectroscopically characterized acceptors A0, A1, FX, FA and FB in turn.</text>
</comment>
<comment type="catalytic activity">
    <reaction evidence="2">
        <text>reduced [plastocyanin] + hnu + oxidized [2Fe-2S]-[ferredoxin] = oxidized [plastocyanin] + reduced [2Fe-2S]-[ferredoxin]</text>
        <dbReference type="Rhea" id="RHEA:30407"/>
        <dbReference type="Rhea" id="RHEA-COMP:10000"/>
        <dbReference type="Rhea" id="RHEA-COMP:10001"/>
        <dbReference type="Rhea" id="RHEA-COMP:10039"/>
        <dbReference type="Rhea" id="RHEA-COMP:10040"/>
        <dbReference type="ChEBI" id="CHEBI:29036"/>
        <dbReference type="ChEBI" id="CHEBI:30212"/>
        <dbReference type="ChEBI" id="CHEBI:33737"/>
        <dbReference type="ChEBI" id="CHEBI:33738"/>
        <dbReference type="ChEBI" id="CHEBI:49552"/>
        <dbReference type="EC" id="1.97.1.12"/>
    </reaction>
</comment>
<comment type="cofactor">
    <cofactor evidence="2">
        <name>[4Fe-4S] cluster</name>
        <dbReference type="ChEBI" id="CHEBI:49883"/>
    </cofactor>
    <text evidence="2">Binds 2 [4Fe-4S] clusters. Cluster 2 is most probably the spectroscopically characterized electron acceptor FA and cluster 1 is most probably FB.</text>
</comment>
<comment type="subunit">
    <text evidence="2">The eukaryotic PSI reaction center is composed of at least 11 subunits.</text>
</comment>
<comment type="subcellular location">
    <subcellularLocation>
        <location evidence="2">Plastid</location>
        <location evidence="2">Chloroplast thylakoid membrane</location>
        <topology evidence="2">Peripheral membrane protein</topology>
        <orientation evidence="2">Stromal side</orientation>
    </subcellularLocation>
</comment>
<evidence type="ECO:0000250" key="1"/>
<evidence type="ECO:0000255" key="2">
    <source>
        <dbReference type="HAMAP-Rule" id="MF_01303"/>
    </source>
</evidence>
<proteinExistence type="inferred from homology"/>
<protein>
    <recommendedName>
        <fullName evidence="2">Photosystem I iron-sulfur center</fullName>
        <ecNumber evidence="2">1.97.1.12</ecNumber>
    </recommendedName>
    <alternativeName>
        <fullName evidence="2">9 kDa polypeptide</fullName>
    </alternativeName>
    <alternativeName>
        <fullName evidence="2">PSI-C</fullName>
    </alternativeName>
    <alternativeName>
        <fullName evidence="2">Photosystem I subunit VII</fullName>
    </alternativeName>
    <alternativeName>
        <fullName evidence="2">PsaC</fullName>
    </alternativeName>
</protein>
<accession>P31556</accession>
<name>PSAC_EUGGR</name>